<comment type="function">
    <text evidence="1">Deubiquitinating enzyme that removes conjugated ubiquitin from specific proteins to regulate different cellular processes that may include cell proliferation, progression through the cell cycle, apoptosis, cell migration, and the cellular response to viral infection.</text>
</comment>
<comment type="catalytic activity">
    <reaction>
        <text>Thiol-dependent hydrolysis of ester, thioester, amide, peptide and isopeptide bonds formed by the C-terminal Gly of ubiquitin (a 76-residue protein attached to proteins as an intracellular targeting signal).</text>
        <dbReference type="EC" id="3.4.19.12"/>
    </reaction>
</comment>
<comment type="subcellular location">
    <subcellularLocation>
        <location evidence="1">Nucleus</location>
    </subcellularLocation>
    <subcellularLocation>
        <location evidence="1">Endoplasmic reticulum</location>
    </subcellularLocation>
</comment>
<comment type="similarity">
    <text evidence="5">Belongs to the peptidase C19 family. USP17 subfamily.</text>
</comment>
<comment type="caution">
    <text evidence="5">The RS447 megasatellite DNA is a highly polymorphic conserved tandem repetitive sequence which contains a copy of the USP17 gene. It is present with an interindividual variation in copy number, ranging from 20 to 103, and can be found in the genome on chromosome 4 and chromosome 8. The high similarity between the UPS17-like genes makes it impossible to specifically assign data to a particular gene of the family. Oligonucleotides designed in RNAi experiments are for instance not specific for a given UPS17-like gene.</text>
</comment>
<organism>
    <name type="scientific">Homo sapiens</name>
    <name type="common">Human</name>
    <dbReference type="NCBI Taxonomy" id="9606"/>
    <lineage>
        <taxon>Eukaryota</taxon>
        <taxon>Metazoa</taxon>
        <taxon>Chordata</taxon>
        <taxon>Craniata</taxon>
        <taxon>Vertebrata</taxon>
        <taxon>Euteleostomi</taxon>
        <taxon>Mammalia</taxon>
        <taxon>Eutheria</taxon>
        <taxon>Euarchontoglires</taxon>
        <taxon>Primates</taxon>
        <taxon>Haplorrhini</taxon>
        <taxon>Catarrhini</taxon>
        <taxon>Hominidae</taxon>
        <taxon>Homo</taxon>
    </lineage>
</organism>
<protein>
    <recommendedName>
        <fullName>Ubiquitin carboxyl-terminal hydrolase 17-like protein 17</fullName>
        <ecNumber>3.4.19.12</ecNumber>
    </recommendedName>
</protein>
<dbReference type="EC" id="3.4.19.12"/>
<dbReference type="EMBL" id="AC108519">
    <property type="status" value="NOT_ANNOTATED_CDS"/>
    <property type="molecule type" value="Genomic_DNA"/>
</dbReference>
<dbReference type="CCDS" id="CCDS59458.1"/>
<dbReference type="RefSeq" id="NP_001243786.1">
    <property type="nucleotide sequence ID" value="NM_001256857.1"/>
</dbReference>
<dbReference type="SMR" id="D6RBQ6"/>
<dbReference type="BioGRID" id="938988">
    <property type="interactions" value="2"/>
</dbReference>
<dbReference type="FunCoup" id="D6RBQ6">
    <property type="interactions" value="117"/>
</dbReference>
<dbReference type="IntAct" id="D6RBQ6">
    <property type="interactions" value="1"/>
</dbReference>
<dbReference type="STRING" id="9606.ENSP00000422621"/>
<dbReference type="MEROPS" id="C19.078"/>
<dbReference type="MEROPS" id="C19.A92"/>
<dbReference type="BioMuta" id="USP17L17"/>
<dbReference type="jPOST" id="D6RBQ6"/>
<dbReference type="MassIVE" id="D6RBQ6"/>
<dbReference type="PaxDb" id="9606-ENSP00000422621"/>
<dbReference type="Antibodypedia" id="77398">
    <property type="antibodies" value="3 antibodies from 1 providers"/>
</dbReference>
<dbReference type="DNASU" id="100287327"/>
<dbReference type="Ensembl" id="ENST00000511568.1">
    <property type="protein sequence ID" value="ENSP00000422621.1"/>
    <property type="gene ID" value="ENSG00000249104.3"/>
</dbReference>
<dbReference type="GeneID" id="100287327"/>
<dbReference type="KEGG" id="hsa:100287327"/>
<dbReference type="MANE-Select" id="ENST00000511568.1">
    <property type="protein sequence ID" value="ENSP00000422621.1"/>
    <property type="RefSeq nucleotide sequence ID" value="NM_001256857.1"/>
    <property type="RefSeq protein sequence ID" value="NP_001243786.1"/>
</dbReference>
<dbReference type="UCSC" id="uc031sdl.1">
    <property type="organism name" value="human"/>
</dbReference>
<dbReference type="AGR" id="HGNC:44445"/>
<dbReference type="CTD" id="100287327"/>
<dbReference type="GeneCards" id="USP17L17"/>
<dbReference type="HGNC" id="HGNC:44445">
    <property type="gene designation" value="USP17L17"/>
</dbReference>
<dbReference type="HPA" id="ENSG00000249104">
    <property type="expression patterns" value="Not detected"/>
</dbReference>
<dbReference type="neXtProt" id="NX_D6RBQ6"/>
<dbReference type="VEuPathDB" id="HostDB:ENSG00000249104"/>
<dbReference type="eggNOG" id="KOG1865">
    <property type="taxonomic scope" value="Eukaryota"/>
</dbReference>
<dbReference type="GeneTree" id="ENSGT00940000161948"/>
<dbReference type="InParanoid" id="D6RBQ6"/>
<dbReference type="OMA" id="SHCREET"/>
<dbReference type="OrthoDB" id="8832at9604"/>
<dbReference type="PAN-GO" id="D6RBQ6">
    <property type="GO annotations" value="6 GO annotations based on evolutionary models"/>
</dbReference>
<dbReference type="PhylomeDB" id="D6RBQ6"/>
<dbReference type="TreeFam" id="TF315281"/>
<dbReference type="PathwayCommons" id="D6RBQ6"/>
<dbReference type="Reactome" id="R-HSA-5689880">
    <property type="pathway name" value="Ub-specific processing proteases"/>
</dbReference>
<dbReference type="BioGRID-ORCS" id="100287327">
    <property type="hits" value="6 hits in 246 CRISPR screens"/>
</dbReference>
<dbReference type="GenomeRNAi" id="100287327"/>
<dbReference type="Pharos" id="D6RBQ6">
    <property type="development level" value="Tdark"/>
</dbReference>
<dbReference type="PRO" id="PR:D6RBQ6"/>
<dbReference type="Proteomes" id="UP000005640">
    <property type="component" value="Chromosome 4"/>
</dbReference>
<dbReference type="RNAct" id="D6RBQ6">
    <property type="molecule type" value="protein"/>
</dbReference>
<dbReference type="Bgee" id="ENSG00000249104">
    <property type="expression patterns" value="Expressed in blood and 1 other cell type or tissue"/>
</dbReference>
<dbReference type="GO" id="GO:0005829">
    <property type="term" value="C:cytosol"/>
    <property type="evidence" value="ECO:0000318"/>
    <property type="project" value="GO_Central"/>
</dbReference>
<dbReference type="GO" id="GO:0005783">
    <property type="term" value="C:endoplasmic reticulum"/>
    <property type="evidence" value="ECO:0007669"/>
    <property type="project" value="UniProtKB-SubCell"/>
</dbReference>
<dbReference type="GO" id="GO:0005634">
    <property type="term" value="C:nucleus"/>
    <property type="evidence" value="ECO:0000318"/>
    <property type="project" value="GO_Central"/>
</dbReference>
<dbReference type="GO" id="GO:0004843">
    <property type="term" value="F:cysteine-type deubiquitinase activity"/>
    <property type="evidence" value="ECO:0000318"/>
    <property type="project" value="GO_Central"/>
</dbReference>
<dbReference type="GO" id="GO:0016579">
    <property type="term" value="P:protein deubiquitination"/>
    <property type="evidence" value="ECO:0007669"/>
    <property type="project" value="InterPro"/>
</dbReference>
<dbReference type="GO" id="GO:0006508">
    <property type="term" value="P:proteolysis"/>
    <property type="evidence" value="ECO:0007669"/>
    <property type="project" value="UniProtKB-KW"/>
</dbReference>
<dbReference type="GO" id="GO:0042981">
    <property type="term" value="P:regulation of apoptotic process"/>
    <property type="evidence" value="ECO:0000318"/>
    <property type="project" value="GO_Central"/>
</dbReference>
<dbReference type="GO" id="GO:0031647">
    <property type="term" value="P:regulation of protein stability"/>
    <property type="evidence" value="ECO:0000318"/>
    <property type="project" value="GO_Central"/>
</dbReference>
<dbReference type="CDD" id="cd02661">
    <property type="entry name" value="Peptidase_C19E"/>
    <property type="match status" value="1"/>
</dbReference>
<dbReference type="FunFam" id="3.90.70.10:FF:000070">
    <property type="entry name" value="Ubiquitin carboxyl-terminal hydrolase 17-like protein 17"/>
    <property type="match status" value="1"/>
</dbReference>
<dbReference type="Gene3D" id="3.90.70.10">
    <property type="entry name" value="Cysteine proteinases"/>
    <property type="match status" value="1"/>
</dbReference>
<dbReference type="InterPro" id="IPR006861">
    <property type="entry name" value="HABP4_PAIRBP1-bd"/>
</dbReference>
<dbReference type="InterPro" id="IPR038765">
    <property type="entry name" value="Papain-like_cys_pep_sf"/>
</dbReference>
<dbReference type="InterPro" id="IPR050164">
    <property type="entry name" value="Peptidase_C19"/>
</dbReference>
<dbReference type="InterPro" id="IPR001394">
    <property type="entry name" value="Peptidase_C19_UCH"/>
</dbReference>
<dbReference type="InterPro" id="IPR018200">
    <property type="entry name" value="USP_CS"/>
</dbReference>
<dbReference type="InterPro" id="IPR028889">
    <property type="entry name" value="USP_dom"/>
</dbReference>
<dbReference type="PANTHER" id="PTHR24006:SF651">
    <property type="entry name" value="INACTIVE UBIQUITIN CARBOXYL-TERMINAL HYDROLASE 17-LIKE PROTEIN 4-RELATED"/>
    <property type="match status" value="1"/>
</dbReference>
<dbReference type="PANTHER" id="PTHR24006">
    <property type="entry name" value="UBIQUITIN CARBOXYL-TERMINAL HYDROLASE"/>
    <property type="match status" value="1"/>
</dbReference>
<dbReference type="Pfam" id="PF04774">
    <property type="entry name" value="HABP4_PAI-RBP1"/>
    <property type="match status" value="1"/>
</dbReference>
<dbReference type="Pfam" id="PF00443">
    <property type="entry name" value="UCH"/>
    <property type="match status" value="1"/>
</dbReference>
<dbReference type="SUPFAM" id="SSF54001">
    <property type="entry name" value="Cysteine proteinases"/>
    <property type="match status" value="1"/>
</dbReference>
<dbReference type="PROSITE" id="PS00972">
    <property type="entry name" value="USP_1"/>
    <property type="match status" value="1"/>
</dbReference>
<dbReference type="PROSITE" id="PS00973">
    <property type="entry name" value="USP_2"/>
    <property type="match status" value="1"/>
</dbReference>
<dbReference type="PROSITE" id="PS50235">
    <property type="entry name" value="USP_3"/>
    <property type="match status" value="1"/>
</dbReference>
<accession>D6RBQ6</accession>
<evidence type="ECO:0000250" key="1"/>
<evidence type="ECO:0000255" key="2">
    <source>
        <dbReference type="PROSITE-ProRule" id="PRU10092"/>
    </source>
</evidence>
<evidence type="ECO:0000255" key="3">
    <source>
        <dbReference type="PROSITE-ProRule" id="PRU10093"/>
    </source>
</evidence>
<evidence type="ECO:0000256" key="4">
    <source>
        <dbReference type="SAM" id="MobiDB-lite"/>
    </source>
</evidence>
<evidence type="ECO:0000305" key="5"/>
<sequence>MEDDSLYLGGEWQFNHFSKLTSSRPDAAFAEIQRTSLPEKSPLSCETRVDLCDDLAPVARQLAPREKLPLSSRRPAAVGAGLQNMGNTCYVNASLQCLTYTPPLANYMLSREHSQTCHRHKGCMLCTMQAHITRALHNPGHVIQPSQALAAGFHRGKQEDAHEFLMFTVDAMKKACLPGHKQVDHHSKDTTLIHQIFGGYWRSQIKCLHCHGISDTFDPYLDIALDIQAAQSVQQALEQLVKPEELNGENAYHCGVCLQRAPASKTLTLHTSAKVLILVLKRFSDVTGNKIAKNVQYPECLDMQPYMSQQNTGPLVYVLYAVLVHAGWSCHNGHYFSYVKAQEGQWYKMDDAEVTAASITSVLSQQAYVLFYIQKSEWERHSESVSRGREPRALGAEDTDRRATQGELKRDHPCLQAPELDEHLVERATQESTLDHWKFLQEQNKTKPEFNVRKVEGTLPPDVLVIHQSKYKCGMKNHHPEQQSSLLNLSSSTPTHQESMNTGTLASLRGRARRSKGKNKHSKRALLVCQ</sequence>
<proteinExistence type="inferred from homology"/>
<feature type="chain" id="PRO_0000421091" description="Ubiquitin carboxyl-terminal hydrolase 17-like protein 17">
    <location>
        <begin position="1"/>
        <end position="530"/>
    </location>
</feature>
<feature type="domain" description="USP">
    <location>
        <begin position="80"/>
        <end position="375"/>
    </location>
</feature>
<feature type="region of interest" description="Disordered" evidence="4">
    <location>
        <begin position="382"/>
        <end position="411"/>
    </location>
</feature>
<feature type="region of interest" description="Disordered" evidence="4">
    <location>
        <begin position="477"/>
        <end position="530"/>
    </location>
</feature>
<feature type="compositionally biased region" description="Basic and acidic residues" evidence="4">
    <location>
        <begin position="382"/>
        <end position="392"/>
    </location>
</feature>
<feature type="compositionally biased region" description="Basic and acidic residues" evidence="4">
    <location>
        <begin position="398"/>
        <end position="411"/>
    </location>
</feature>
<feature type="compositionally biased region" description="Polar residues" evidence="4">
    <location>
        <begin position="493"/>
        <end position="505"/>
    </location>
</feature>
<feature type="compositionally biased region" description="Basic residues" evidence="4">
    <location>
        <begin position="510"/>
        <end position="524"/>
    </location>
</feature>
<feature type="active site" description="Nucleophile" evidence="2 3">
    <location>
        <position position="89"/>
    </location>
</feature>
<feature type="active site" description="Proton acceptor" evidence="2 3">
    <location>
        <position position="334"/>
    </location>
</feature>
<gene>
    <name type="primary">USP17L17</name>
</gene>
<name>U17LH_HUMAN</name>
<keyword id="KW-0256">Endoplasmic reticulum</keyword>
<keyword id="KW-0378">Hydrolase</keyword>
<keyword id="KW-0539">Nucleus</keyword>
<keyword id="KW-0645">Protease</keyword>
<keyword id="KW-1185">Reference proteome</keyword>
<keyword id="KW-0788">Thiol protease</keyword>
<keyword id="KW-0833">Ubl conjugation pathway</keyword>
<reference key="1">
    <citation type="journal article" date="2005" name="Nature">
        <title>Generation and annotation of the DNA sequences of human chromosomes 2 and 4.</title>
        <authorList>
            <person name="Hillier L.W."/>
            <person name="Graves T.A."/>
            <person name="Fulton R.S."/>
            <person name="Fulton L.A."/>
            <person name="Pepin K.H."/>
            <person name="Minx P."/>
            <person name="Wagner-McPherson C."/>
            <person name="Layman D."/>
            <person name="Wylie K."/>
            <person name="Sekhon M."/>
            <person name="Becker M.C."/>
            <person name="Fewell G.A."/>
            <person name="Delehaunty K.D."/>
            <person name="Miner T.L."/>
            <person name="Nash W.E."/>
            <person name="Kremitzki C."/>
            <person name="Oddy L."/>
            <person name="Du H."/>
            <person name="Sun H."/>
            <person name="Bradshaw-Cordum H."/>
            <person name="Ali J."/>
            <person name="Carter J."/>
            <person name="Cordes M."/>
            <person name="Harris A."/>
            <person name="Isak A."/>
            <person name="van Brunt A."/>
            <person name="Nguyen C."/>
            <person name="Du F."/>
            <person name="Courtney L."/>
            <person name="Kalicki J."/>
            <person name="Ozersky P."/>
            <person name="Abbott S."/>
            <person name="Armstrong J."/>
            <person name="Belter E.A."/>
            <person name="Caruso L."/>
            <person name="Cedroni M."/>
            <person name="Cotton M."/>
            <person name="Davidson T."/>
            <person name="Desai A."/>
            <person name="Elliott G."/>
            <person name="Erb T."/>
            <person name="Fronick C."/>
            <person name="Gaige T."/>
            <person name="Haakenson W."/>
            <person name="Haglund K."/>
            <person name="Holmes A."/>
            <person name="Harkins R."/>
            <person name="Kim K."/>
            <person name="Kruchowski S.S."/>
            <person name="Strong C.M."/>
            <person name="Grewal N."/>
            <person name="Goyea E."/>
            <person name="Hou S."/>
            <person name="Levy A."/>
            <person name="Martinka S."/>
            <person name="Mead K."/>
            <person name="McLellan M.D."/>
            <person name="Meyer R."/>
            <person name="Randall-Maher J."/>
            <person name="Tomlinson C."/>
            <person name="Dauphin-Kohlberg S."/>
            <person name="Kozlowicz-Reilly A."/>
            <person name="Shah N."/>
            <person name="Swearengen-Shahid S."/>
            <person name="Snider J."/>
            <person name="Strong J.T."/>
            <person name="Thompson J."/>
            <person name="Yoakum M."/>
            <person name="Leonard S."/>
            <person name="Pearman C."/>
            <person name="Trani L."/>
            <person name="Radionenko M."/>
            <person name="Waligorski J.E."/>
            <person name="Wang C."/>
            <person name="Rock S.M."/>
            <person name="Tin-Wollam A.-M."/>
            <person name="Maupin R."/>
            <person name="Latreille P."/>
            <person name="Wendl M.C."/>
            <person name="Yang S.-P."/>
            <person name="Pohl C."/>
            <person name="Wallis J.W."/>
            <person name="Spieth J."/>
            <person name="Bieri T.A."/>
            <person name="Berkowicz N."/>
            <person name="Nelson J.O."/>
            <person name="Osborne J."/>
            <person name="Ding L."/>
            <person name="Meyer R."/>
            <person name="Sabo A."/>
            <person name="Shotland Y."/>
            <person name="Sinha P."/>
            <person name="Wohldmann P.E."/>
            <person name="Cook L.L."/>
            <person name="Hickenbotham M.T."/>
            <person name="Eldred J."/>
            <person name="Williams D."/>
            <person name="Jones T.A."/>
            <person name="She X."/>
            <person name="Ciccarelli F.D."/>
            <person name="Izaurralde E."/>
            <person name="Taylor J."/>
            <person name="Schmutz J."/>
            <person name="Myers R.M."/>
            <person name="Cox D.R."/>
            <person name="Huang X."/>
            <person name="McPherson J.D."/>
            <person name="Mardis E.R."/>
            <person name="Clifton S.W."/>
            <person name="Warren W.C."/>
            <person name="Chinwalla A.T."/>
            <person name="Eddy S.R."/>
            <person name="Marra M.A."/>
            <person name="Ovcharenko I."/>
            <person name="Furey T.S."/>
            <person name="Miller W."/>
            <person name="Eichler E.E."/>
            <person name="Bork P."/>
            <person name="Suyama M."/>
            <person name="Torrents D."/>
            <person name="Waterston R.H."/>
            <person name="Wilson R.K."/>
        </authorList>
    </citation>
    <scope>NUCLEOTIDE SEQUENCE [LARGE SCALE GENOMIC DNA]</scope>
</reference>